<gene>
    <name evidence="1" type="primary">psuG2</name>
    <name type="ordered locus">plu4351</name>
</gene>
<accession>Q7MZE1</accession>
<name>PSUG2_PHOLL</name>
<keyword id="KW-0326">Glycosidase</keyword>
<keyword id="KW-0378">Hydrolase</keyword>
<keyword id="KW-0456">Lyase</keyword>
<keyword id="KW-0464">Manganese</keyword>
<keyword id="KW-0479">Metal-binding</keyword>
<keyword id="KW-1185">Reference proteome</keyword>
<evidence type="ECO:0000255" key="1">
    <source>
        <dbReference type="HAMAP-Rule" id="MF_01876"/>
    </source>
</evidence>
<reference key="1">
    <citation type="journal article" date="2003" name="Nat. Biotechnol.">
        <title>The genome sequence of the entomopathogenic bacterium Photorhabdus luminescens.</title>
        <authorList>
            <person name="Duchaud E."/>
            <person name="Rusniok C."/>
            <person name="Frangeul L."/>
            <person name="Buchrieser C."/>
            <person name="Givaudan A."/>
            <person name="Taourit S."/>
            <person name="Bocs S."/>
            <person name="Boursaux-Eude C."/>
            <person name="Chandler M."/>
            <person name="Charles J.-F."/>
            <person name="Dassa E."/>
            <person name="Derose R."/>
            <person name="Derzelle S."/>
            <person name="Freyssinet G."/>
            <person name="Gaudriault S."/>
            <person name="Medigue C."/>
            <person name="Lanois A."/>
            <person name="Powell K."/>
            <person name="Siguier P."/>
            <person name="Vincent R."/>
            <person name="Wingate V."/>
            <person name="Zouine M."/>
            <person name="Glaser P."/>
            <person name="Boemare N."/>
            <person name="Danchin A."/>
            <person name="Kunst F."/>
        </authorList>
    </citation>
    <scope>NUCLEOTIDE SEQUENCE [LARGE SCALE GENOMIC DNA]</scope>
    <source>
        <strain>DSM 15139 / CIP 105565 / TT01</strain>
    </source>
</reference>
<dbReference type="EC" id="4.2.1.70" evidence="1"/>
<dbReference type="EMBL" id="BX571873">
    <property type="protein sequence ID" value="CAE16723.1"/>
    <property type="molecule type" value="Genomic_DNA"/>
</dbReference>
<dbReference type="RefSeq" id="WP_011148441.1">
    <property type="nucleotide sequence ID" value="NC_005126.1"/>
</dbReference>
<dbReference type="SMR" id="Q7MZE1"/>
<dbReference type="STRING" id="243265.plu4351"/>
<dbReference type="GeneID" id="48850559"/>
<dbReference type="KEGG" id="plu:plu4351"/>
<dbReference type="eggNOG" id="COG2313">
    <property type="taxonomic scope" value="Bacteria"/>
</dbReference>
<dbReference type="HOGENOM" id="CLU_012201_0_1_6"/>
<dbReference type="OrthoDB" id="9805870at2"/>
<dbReference type="Proteomes" id="UP000002514">
    <property type="component" value="Chromosome"/>
</dbReference>
<dbReference type="GO" id="GO:0005737">
    <property type="term" value="C:cytoplasm"/>
    <property type="evidence" value="ECO:0007669"/>
    <property type="project" value="TreeGrafter"/>
</dbReference>
<dbReference type="GO" id="GO:0016798">
    <property type="term" value="F:hydrolase activity, acting on glycosyl bonds"/>
    <property type="evidence" value="ECO:0007669"/>
    <property type="project" value="UniProtKB-KW"/>
</dbReference>
<dbReference type="GO" id="GO:0046872">
    <property type="term" value="F:metal ion binding"/>
    <property type="evidence" value="ECO:0007669"/>
    <property type="project" value="UniProtKB-KW"/>
</dbReference>
<dbReference type="GO" id="GO:0004730">
    <property type="term" value="F:pseudouridylate synthase activity"/>
    <property type="evidence" value="ECO:0007669"/>
    <property type="project" value="UniProtKB-UniRule"/>
</dbReference>
<dbReference type="GO" id="GO:0046113">
    <property type="term" value="P:nucleobase catabolic process"/>
    <property type="evidence" value="ECO:0007669"/>
    <property type="project" value="UniProtKB-UniRule"/>
</dbReference>
<dbReference type="FunFam" id="3.40.1790.10:FF:000001">
    <property type="entry name" value="Indigoidine synthase A family protein"/>
    <property type="match status" value="1"/>
</dbReference>
<dbReference type="Gene3D" id="3.40.1790.10">
    <property type="entry name" value="Indigoidine synthase domain"/>
    <property type="match status" value="1"/>
</dbReference>
<dbReference type="HAMAP" id="MF_01876">
    <property type="entry name" value="PsiMP_glycosidase"/>
    <property type="match status" value="1"/>
</dbReference>
<dbReference type="InterPro" id="IPR022830">
    <property type="entry name" value="Indigdn_synthA-like"/>
</dbReference>
<dbReference type="InterPro" id="IPR007342">
    <property type="entry name" value="PsuG"/>
</dbReference>
<dbReference type="PANTHER" id="PTHR42909:SF1">
    <property type="entry name" value="CARBOHYDRATE KINASE PFKB DOMAIN-CONTAINING PROTEIN"/>
    <property type="match status" value="1"/>
</dbReference>
<dbReference type="PANTHER" id="PTHR42909">
    <property type="entry name" value="ZGC:136858"/>
    <property type="match status" value="1"/>
</dbReference>
<dbReference type="Pfam" id="PF04227">
    <property type="entry name" value="Indigoidine_A"/>
    <property type="match status" value="1"/>
</dbReference>
<dbReference type="SUPFAM" id="SSF110581">
    <property type="entry name" value="Indigoidine synthase A-like"/>
    <property type="match status" value="1"/>
</dbReference>
<feature type="chain" id="PRO_0000390536" description="Pseudouridine-5'-phosphate glycosidase 2">
    <location>
        <begin position="1"/>
        <end position="312"/>
    </location>
</feature>
<feature type="active site" description="Proton donor" evidence="1">
    <location>
        <position position="31"/>
    </location>
</feature>
<feature type="active site" description="Nucleophile" evidence="1">
    <location>
        <position position="166"/>
    </location>
</feature>
<feature type="binding site" evidence="1">
    <location>
        <position position="93"/>
    </location>
    <ligand>
        <name>substrate</name>
    </ligand>
</feature>
<feature type="binding site" evidence="1">
    <location>
        <position position="113"/>
    </location>
    <ligand>
        <name>substrate</name>
    </ligand>
</feature>
<feature type="binding site" evidence="1">
    <location>
        <position position="145"/>
    </location>
    <ligand>
        <name>Mn(2+)</name>
        <dbReference type="ChEBI" id="CHEBI:29035"/>
    </ligand>
</feature>
<feature type="binding site" evidence="1">
    <location>
        <begin position="147"/>
        <end position="149"/>
    </location>
    <ligand>
        <name>substrate</name>
    </ligand>
</feature>
<sequence>MKNHAISNKYLDISPEVTEALENNRPVVALESTIIAHGMPYPQNVKTALQVEQKIRENGAVPATIAVINGMMKAGLSHEEIAFLARKGDEITKVSRRDLPFVIAAGKNGATTVASTMIIAAMAGIRIFATGGIGGVHRGAEQTFDISADLQELAKTSVAVVCAGAKSILDLGLTTEYLETHGVPLIGYQTHALPAFFCRTSPFSVNIRLDSPEQIAQAMAVKWDTGLQGGLVVANPIPEPYAMPEAEISAAIEQAVRESIEQRVNGKACTPFLLARVSELTGGNSLSSNIQLVLNNAELAAKIACCYWERHM</sequence>
<organism>
    <name type="scientific">Photorhabdus laumondii subsp. laumondii (strain DSM 15139 / CIP 105565 / TT01)</name>
    <name type="common">Photorhabdus luminescens subsp. laumondii</name>
    <dbReference type="NCBI Taxonomy" id="243265"/>
    <lineage>
        <taxon>Bacteria</taxon>
        <taxon>Pseudomonadati</taxon>
        <taxon>Pseudomonadota</taxon>
        <taxon>Gammaproteobacteria</taxon>
        <taxon>Enterobacterales</taxon>
        <taxon>Morganellaceae</taxon>
        <taxon>Photorhabdus</taxon>
    </lineage>
</organism>
<proteinExistence type="inferred from homology"/>
<protein>
    <recommendedName>
        <fullName evidence="1">Pseudouridine-5'-phosphate glycosidase 2</fullName>
        <shortName evidence="1">PsiMP glycosidase 2</shortName>
        <ecNumber evidence="1">4.2.1.70</ecNumber>
    </recommendedName>
</protein>
<comment type="function">
    <text evidence="1">Catalyzes the reversible cleavage of pseudouridine 5'-phosphate (PsiMP) to ribose 5-phosphate and uracil. Functions biologically in the cleavage direction, as part of a pseudouridine degradation pathway.</text>
</comment>
<comment type="catalytic activity">
    <reaction evidence="1">
        <text>D-ribose 5-phosphate + uracil = psi-UMP + H2O</text>
        <dbReference type="Rhea" id="RHEA:18337"/>
        <dbReference type="ChEBI" id="CHEBI:15377"/>
        <dbReference type="ChEBI" id="CHEBI:17568"/>
        <dbReference type="ChEBI" id="CHEBI:58380"/>
        <dbReference type="ChEBI" id="CHEBI:78346"/>
        <dbReference type="EC" id="4.2.1.70"/>
    </reaction>
</comment>
<comment type="cofactor">
    <cofactor evidence="1">
        <name>Mn(2+)</name>
        <dbReference type="ChEBI" id="CHEBI:29035"/>
    </cofactor>
    <text evidence="1">Binds 1 Mn(2+) ion per subunit.</text>
</comment>
<comment type="subunit">
    <text evidence="1">Homotrimer.</text>
</comment>
<comment type="similarity">
    <text evidence="1">Belongs to the pseudouridine-5'-phosphate glycosidase family.</text>
</comment>